<organism>
    <name type="scientific">Klebsiella pneumoniae</name>
    <dbReference type="NCBI Taxonomy" id="573"/>
    <lineage>
        <taxon>Bacteria</taxon>
        <taxon>Pseudomonadati</taxon>
        <taxon>Pseudomonadota</taxon>
        <taxon>Gammaproteobacteria</taxon>
        <taxon>Enterobacterales</taxon>
        <taxon>Enterobacteriaceae</taxon>
        <taxon>Klebsiella/Raoultella group</taxon>
        <taxon>Klebsiella</taxon>
        <taxon>Klebsiella pneumoniae complex</taxon>
    </lineage>
</organism>
<keyword id="KW-0479">Metal-binding</keyword>
<keyword id="KW-0533">Nickel</keyword>
<keyword id="KW-0862">Zinc</keyword>
<feature type="chain" id="PRO_0000129066" description="Hydrogenase maturation factor HybF">
    <location>
        <begin position="1"/>
        <end position="113"/>
    </location>
</feature>
<feature type="binding site" evidence="1">
    <location>
        <position position="2"/>
    </location>
    <ligand>
        <name>Ni(2+)</name>
        <dbReference type="ChEBI" id="CHEBI:49786"/>
    </ligand>
</feature>
<feature type="binding site" evidence="1">
    <location>
        <position position="3"/>
    </location>
    <ligand>
        <name>Ni(2+)</name>
        <dbReference type="ChEBI" id="CHEBI:49786"/>
    </ligand>
</feature>
<feature type="binding site" evidence="1">
    <location>
        <position position="73"/>
    </location>
    <ligand>
        <name>Zn(2+)</name>
        <dbReference type="ChEBI" id="CHEBI:29105"/>
    </ligand>
</feature>
<feature type="binding site" evidence="1">
    <location>
        <position position="76"/>
    </location>
    <ligand>
        <name>Zn(2+)</name>
        <dbReference type="ChEBI" id="CHEBI:29105"/>
    </ligand>
</feature>
<feature type="binding site" evidence="1">
    <location>
        <position position="89"/>
    </location>
    <ligand>
        <name>Zn(2+)</name>
        <dbReference type="ChEBI" id="CHEBI:29105"/>
    </ligand>
</feature>
<feature type="binding site" evidence="1">
    <location>
        <position position="92"/>
    </location>
    <ligand>
        <name>Zn(2+)</name>
        <dbReference type="ChEBI" id="CHEBI:29105"/>
    </ligand>
</feature>
<proteinExistence type="inferred from homology"/>
<name>HYBF_KLEPN</name>
<evidence type="ECO:0000255" key="1">
    <source>
        <dbReference type="HAMAP-Rule" id="MF_02099"/>
    </source>
</evidence>
<dbReference type="EMBL" id="AF259520">
    <property type="protein sequence ID" value="AAG36925.1"/>
    <property type="molecule type" value="Genomic_DNA"/>
</dbReference>
<dbReference type="SMR" id="Q9F0D4"/>
<dbReference type="GO" id="GO:0016151">
    <property type="term" value="F:nickel cation binding"/>
    <property type="evidence" value="ECO:0007669"/>
    <property type="project" value="UniProtKB-UniRule"/>
</dbReference>
<dbReference type="GO" id="GO:0008270">
    <property type="term" value="F:zinc ion binding"/>
    <property type="evidence" value="ECO:0007669"/>
    <property type="project" value="UniProtKB-UniRule"/>
</dbReference>
<dbReference type="GO" id="GO:0051604">
    <property type="term" value="P:protein maturation"/>
    <property type="evidence" value="ECO:0007669"/>
    <property type="project" value="InterPro"/>
</dbReference>
<dbReference type="GO" id="GO:0036211">
    <property type="term" value="P:protein modification process"/>
    <property type="evidence" value="ECO:0007669"/>
    <property type="project" value="UniProtKB-UniRule"/>
</dbReference>
<dbReference type="FunFam" id="3.30.2320.80:FF:000001">
    <property type="entry name" value="Hydrogenase maturation factor HypA"/>
    <property type="match status" value="1"/>
</dbReference>
<dbReference type="Gene3D" id="3.30.2320.80">
    <property type="match status" value="1"/>
</dbReference>
<dbReference type="HAMAP" id="MF_02099">
    <property type="entry name" value="HybF_subfam"/>
    <property type="match status" value="1"/>
</dbReference>
<dbReference type="HAMAP" id="MF_00213">
    <property type="entry name" value="HypA_HybF"/>
    <property type="match status" value="1"/>
</dbReference>
<dbReference type="InterPro" id="IPR039002">
    <property type="entry name" value="HybF"/>
</dbReference>
<dbReference type="InterPro" id="IPR020538">
    <property type="entry name" value="Hydgase_Ni_incorp_HypA/HybF_CS"/>
</dbReference>
<dbReference type="InterPro" id="IPR000688">
    <property type="entry name" value="HypA/HybF"/>
</dbReference>
<dbReference type="NCBIfam" id="TIGR00100">
    <property type="entry name" value="hypA"/>
    <property type="match status" value="1"/>
</dbReference>
<dbReference type="NCBIfam" id="NF009046">
    <property type="entry name" value="PRK12380.1"/>
    <property type="match status" value="1"/>
</dbReference>
<dbReference type="PANTHER" id="PTHR34535:SF4">
    <property type="entry name" value="HYDROGENASE MATURATION FACTOR HYBF"/>
    <property type="match status" value="1"/>
</dbReference>
<dbReference type="PANTHER" id="PTHR34535">
    <property type="entry name" value="HYDROGENASE MATURATION FACTOR HYPA"/>
    <property type="match status" value="1"/>
</dbReference>
<dbReference type="Pfam" id="PF01155">
    <property type="entry name" value="HypA"/>
    <property type="match status" value="1"/>
</dbReference>
<dbReference type="PIRSF" id="PIRSF004761">
    <property type="entry name" value="Hydrgn_mat_HypA"/>
    <property type="match status" value="1"/>
</dbReference>
<dbReference type="PROSITE" id="PS01249">
    <property type="entry name" value="HYPA"/>
    <property type="match status" value="1"/>
</dbReference>
<sequence>MHELSLCMSAADIIREQAEQHGIARVTDVWLEVGALADVEESALHFCFDIACRDTVAQGCTLHIDVIPAQAWCWDCSREAEIMQHAGCCPHCGSERLRITEGDDLRVKSLEGE</sequence>
<accession>Q9F0D4</accession>
<comment type="function">
    <text evidence="1">Involved in the maturation of [NiFe] hydrogenases. Required for nickel insertion into the metal center of the hydrogenase.</text>
</comment>
<comment type="similarity">
    <text evidence="1">Belongs to the HypA/HybF family. HybF subfamily.</text>
</comment>
<gene>
    <name evidence="1" type="primary">hybF</name>
</gene>
<reference key="1">
    <citation type="journal article" date="2001" name="J. Antimicrob. Chemother.">
        <title>Plasmid-mediated and inducible cephalosporinase DHA-2 from Klebsiella pneumoniae.</title>
        <authorList>
            <person name="Fortineau N."/>
            <person name="Poirel L."/>
            <person name="Nordmann P."/>
        </authorList>
    </citation>
    <scope>NUCLEOTIDE SEQUENCE [GENOMIC DNA]</scope>
</reference>
<protein>
    <recommendedName>
        <fullName evidence="1">Hydrogenase maturation factor HybF</fullName>
    </recommendedName>
</protein>